<dbReference type="EC" id="2.1.2.1" evidence="1"/>
<dbReference type="EMBL" id="CP000383">
    <property type="protein sequence ID" value="ABG60866.1"/>
    <property type="molecule type" value="Genomic_DNA"/>
</dbReference>
<dbReference type="RefSeq" id="WP_011586971.1">
    <property type="nucleotide sequence ID" value="NC_008255.1"/>
</dbReference>
<dbReference type="SMR" id="Q11NZ7"/>
<dbReference type="STRING" id="269798.CHU_3633"/>
<dbReference type="KEGG" id="chu:CHU_3633"/>
<dbReference type="eggNOG" id="COG0112">
    <property type="taxonomic scope" value="Bacteria"/>
</dbReference>
<dbReference type="HOGENOM" id="CLU_022477_2_1_10"/>
<dbReference type="OrthoDB" id="9803846at2"/>
<dbReference type="UniPathway" id="UPA00193"/>
<dbReference type="UniPathway" id="UPA00288">
    <property type="reaction ID" value="UER01023"/>
</dbReference>
<dbReference type="Proteomes" id="UP000001822">
    <property type="component" value="Chromosome"/>
</dbReference>
<dbReference type="GO" id="GO:0005829">
    <property type="term" value="C:cytosol"/>
    <property type="evidence" value="ECO:0007669"/>
    <property type="project" value="TreeGrafter"/>
</dbReference>
<dbReference type="GO" id="GO:0004372">
    <property type="term" value="F:glycine hydroxymethyltransferase activity"/>
    <property type="evidence" value="ECO:0007669"/>
    <property type="project" value="UniProtKB-UniRule"/>
</dbReference>
<dbReference type="GO" id="GO:0030170">
    <property type="term" value="F:pyridoxal phosphate binding"/>
    <property type="evidence" value="ECO:0007669"/>
    <property type="project" value="UniProtKB-UniRule"/>
</dbReference>
<dbReference type="GO" id="GO:0019264">
    <property type="term" value="P:glycine biosynthetic process from serine"/>
    <property type="evidence" value="ECO:0007669"/>
    <property type="project" value="UniProtKB-UniRule"/>
</dbReference>
<dbReference type="GO" id="GO:0035999">
    <property type="term" value="P:tetrahydrofolate interconversion"/>
    <property type="evidence" value="ECO:0007669"/>
    <property type="project" value="UniProtKB-UniRule"/>
</dbReference>
<dbReference type="CDD" id="cd00378">
    <property type="entry name" value="SHMT"/>
    <property type="match status" value="1"/>
</dbReference>
<dbReference type="FunFam" id="3.40.640.10:FF:000001">
    <property type="entry name" value="Serine hydroxymethyltransferase"/>
    <property type="match status" value="1"/>
</dbReference>
<dbReference type="Gene3D" id="3.90.1150.10">
    <property type="entry name" value="Aspartate Aminotransferase, domain 1"/>
    <property type="match status" value="1"/>
</dbReference>
<dbReference type="Gene3D" id="3.40.640.10">
    <property type="entry name" value="Type I PLP-dependent aspartate aminotransferase-like (Major domain)"/>
    <property type="match status" value="1"/>
</dbReference>
<dbReference type="HAMAP" id="MF_00051">
    <property type="entry name" value="SHMT"/>
    <property type="match status" value="1"/>
</dbReference>
<dbReference type="InterPro" id="IPR015424">
    <property type="entry name" value="PyrdxlP-dep_Trfase"/>
</dbReference>
<dbReference type="InterPro" id="IPR015421">
    <property type="entry name" value="PyrdxlP-dep_Trfase_major"/>
</dbReference>
<dbReference type="InterPro" id="IPR015422">
    <property type="entry name" value="PyrdxlP-dep_Trfase_small"/>
</dbReference>
<dbReference type="InterPro" id="IPR001085">
    <property type="entry name" value="Ser_HO-MeTrfase"/>
</dbReference>
<dbReference type="InterPro" id="IPR049943">
    <property type="entry name" value="Ser_HO-MeTrfase-like"/>
</dbReference>
<dbReference type="InterPro" id="IPR019798">
    <property type="entry name" value="Ser_HO-MeTrfase_PLP_BS"/>
</dbReference>
<dbReference type="InterPro" id="IPR039429">
    <property type="entry name" value="SHMT-like_dom"/>
</dbReference>
<dbReference type="NCBIfam" id="NF000586">
    <property type="entry name" value="PRK00011.1"/>
    <property type="match status" value="1"/>
</dbReference>
<dbReference type="PANTHER" id="PTHR11680">
    <property type="entry name" value="SERINE HYDROXYMETHYLTRANSFERASE"/>
    <property type="match status" value="1"/>
</dbReference>
<dbReference type="PANTHER" id="PTHR11680:SF35">
    <property type="entry name" value="SERINE HYDROXYMETHYLTRANSFERASE 1"/>
    <property type="match status" value="1"/>
</dbReference>
<dbReference type="Pfam" id="PF00464">
    <property type="entry name" value="SHMT"/>
    <property type="match status" value="1"/>
</dbReference>
<dbReference type="PIRSF" id="PIRSF000412">
    <property type="entry name" value="SHMT"/>
    <property type="match status" value="1"/>
</dbReference>
<dbReference type="SUPFAM" id="SSF53383">
    <property type="entry name" value="PLP-dependent transferases"/>
    <property type="match status" value="1"/>
</dbReference>
<dbReference type="PROSITE" id="PS00096">
    <property type="entry name" value="SHMT"/>
    <property type="match status" value="1"/>
</dbReference>
<reference key="1">
    <citation type="journal article" date="2007" name="Appl. Environ. Microbiol.">
        <title>Genome sequence of the cellulolytic gliding bacterium Cytophaga hutchinsonii.</title>
        <authorList>
            <person name="Xie G."/>
            <person name="Bruce D.C."/>
            <person name="Challacombe J.F."/>
            <person name="Chertkov O."/>
            <person name="Detter J.C."/>
            <person name="Gilna P."/>
            <person name="Han C.S."/>
            <person name="Lucas S."/>
            <person name="Misra M."/>
            <person name="Myers G.L."/>
            <person name="Richardson P."/>
            <person name="Tapia R."/>
            <person name="Thayer N."/>
            <person name="Thompson L.S."/>
            <person name="Brettin T.S."/>
            <person name="Henrissat B."/>
            <person name="Wilson D.B."/>
            <person name="McBride M.J."/>
        </authorList>
    </citation>
    <scope>NUCLEOTIDE SEQUENCE [LARGE SCALE GENOMIC DNA]</scope>
    <source>
        <strain>ATCC 33406 / DSM 1761 / JCM 20678 / CIP 103989 / IAM 12607 / NBRC 15051 / NCIMB 9469 / D465</strain>
    </source>
</reference>
<comment type="function">
    <text evidence="1">Catalyzes the reversible interconversion of serine and glycine with tetrahydrofolate (THF) serving as the one-carbon carrier. This reaction serves as the major source of one-carbon groups required for the biosynthesis of purines, thymidylate, methionine, and other important biomolecules. Also exhibits THF-independent aldolase activity toward beta-hydroxyamino acids, producing glycine and aldehydes, via a retro-aldol mechanism.</text>
</comment>
<comment type="catalytic activity">
    <reaction evidence="1">
        <text>(6R)-5,10-methylene-5,6,7,8-tetrahydrofolate + glycine + H2O = (6S)-5,6,7,8-tetrahydrofolate + L-serine</text>
        <dbReference type="Rhea" id="RHEA:15481"/>
        <dbReference type="ChEBI" id="CHEBI:15377"/>
        <dbReference type="ChEBI" id="CHEBI:15636"/>
        <dbReference type="ChEBI" id="CHEBI:33384"/>
        <dbReference type="ChEBI" id="CHEBI:57305"/>
        <dbReference type="ChEBI" id="CHEBI:57453"/>
        <dbReference type="EC" id="2.1.2.1"/>
    </reaction>
</comment>
<comment type="cofactor">
    <cofactor evidence="1">
        <name>pyridoxal 5'-phosphate</name>
        <dbReference type="ChEBI" id="CHEBI:597326"/>
    </cofactor>
</comment>
<comment type="pathway">
    <text evidence="1">One-carbon metabolism; tetrahydrofolate interconversion.</text>
</comment>
<comment type="pathway">
    <text evidence="1">Amino-acid biosynthesis; glycine biosynthesis; glycine from L-serine: step 1/1.</text>
</comment>
<comment type="subunit">
    <text evidence="1">Homodimer.</text>
</comment>
<comment type="subcellular location">
    <subcellularLocation>
        <location evidence="1">Cytoplasm</location>
    </subcellularLocation>
</comment>
<comment type="similarity">
    <text evidence="1">Belongs to the SHMT family.</text>
</comment>
<feature type="chain" id="PRO_0000369916" description="Serine hydroxymethyltransferase">
    <location>
        <begin position="1"/>
        <end position="431"/>
    </location>
</feature>
<feature type="binding site" evidence="1">
    <location>
        <position position="121"/>
    </location>
    <ligand>
        <name>(6S)-5,6,7,8-tetrahydrofolate</name>
        <dbReference type="ChEBI" id="CHEBI:57453"/>
    </ligand>
</feature>
<feature type="binding site" evidence="1">
    <location>
        <begin position="125"/>
        <end position="127"/>
    </location>
    <ligand>
        <name>(6S)-5,6,7,8-tetrahydrofolate</name>
        <dbReference type="ChEBI" id="CHEBI:57453"/>
    </ligand>
</feature>
<feature type="binding site" evidence="1">
    <location>
        <begin position="369"/>
        <end position="371"/>
    </location>
    <ligand>
        <name>(6S)-5,6,7,8-tetrahydrofolate</name>
        <dbReference type="ChEBI" id="CHEBI:57453"/>
    </ligand>
</feature>
<feature type="site" description="Plays an important role in substrate specificity" evidence="1">
    <location>
        <position position="229"/>
    </location>
</feature>
<feature type="modified residue" description="N6-(pyridoxal phosphate)lysine" evidence="1">
    <location>
        <position position="230"/>
    </location>
</feature>
<keyword id="KW-0028">Amino-acid biosynthesis</keyword>
<keyword id="KW-0963">Cytoplasm</keyword>
<keyword id="KW-0554">One-carbon metabolism</keyword>
<keyword id="KW-0663">Pyridoxal phosphate</keyword>
<keyword id="KW-1185">Reference proteome</keyword>
<keyword id="KW-0808">Transferase</keyword>
<sequence>MITAPIRTTARDTQIFDLISKEAHRQEEGIELIASENFTSKQVMEAMGSVLTNKYAEGLPGKRYYGGCQVVDQVEQIAIDRLKKLFGAEWANVQPHSGAQANAAIMIACLNPGDSILGFDLSHGGHLSHGSPVNMSGKYFKAHFYGVEKESGLINMDIVEATALKVKPKMIICGASAYSRDWDYARFRKIADSVGAILLADISHPAGLIAKGLLNDPIPHCHIVSTTTHKTLRGPRGGVIMMGKDFENPFGLKTPKGETRMMSNVLDMGVFPGTQGGPLEHVIAAKAVAFQEALSTDYLQYAKQIQKNAQIMAEAFLKKGYDIISGGTDNHLMLIDLRSKNLTGKEAENALIRADITINKNMVPFDDKSPFVTSGMRVGTAAITSRGMVGDDMIRIVEMIDTVLMNQTKDSVIETVRKDVNNWMAQYPLYI</sequence>
<protein>
    <recommendedName>
        <fullName evidence="1">Serine hydroxymethyltransferase</fullName>
        <shortName evidence="1">SHMT</shortName>
        <shortName evidence="1">Serine methylase</shortName>
        <ecNumber evidence="1">2.1.2.1</ecNumber>
    </recommendedName>
</protein>
<accession>Q11NZ7</accession>
<name>GLYA_CYTH3</name>
<evidence type="ECO:0000255" key="1">
    <source>
        <dbReference type="HAMAP-Rule" id="MF_00051"/>
    </source>
</evidence>
<proteinExistence type="inferred from homology"/>
<organism>
    <name type="scientific">Cytophaga hutchinsonii (strain ATCC 33406 / DSM 1761 / CIP 103989 / NBRC 15051 / NCIMB 9469 / D465)</name>
    <dbReference type="NCBI Taxonomy" id="269798"/>
    <lineage>
        <taxon>Bacteria</taxon>
        <taxon>Pseudomonadati</taxon>
        <taxon>Bacteroidota</taxon>
        <taxon>Cytophagia</taxon>
        <taxon>Cytophagales</taxon>
        <taxon>Cytophagaceae</taxon>
        <taxon>Cytophaga</taxon>
    </lineage>
</organism>
<gene>
    <name evidence="1" type="primary">glyA</name>
    <name type="ordered locus">CHU_3633</name>
</gene>